<sequence>MTASADIRLSDVRFSYGETAMHFDVTITGGEIAAIVGPSGSGKSTFLNLIAGFETPQSGIISINGVDVTHLPPADRPVSMVFQENNLFAHLTVEQNVDLGRSPNLRLNEEDRKAVASALARVGLQGKEKRKPEALSGGERQRVAIARVLVRERPVLLLDEAFASLGPALRHQMLDLVNKLRRETGMTVLMVTHTPEDALHLDALLIFLDNGKIAAQGPATEMLSRAGPEALRHYIGEMRSF</sequence>
<keyword id="KW-0067">ATP-binding</keyword>
<keyword id="KW-0997">Cell inner membrane</keyword>
<keyword id="KW-1003">Cell membrane</keyword>
<keyword id="KW-0472">Membrane</keyword>
<keyword id="KW-0547">Nucleotide-binding</keyword>
<keyword id="KW-1278">Translocase</keyword>
<keyword id="KW-0813">Transport</keyword>
<reference key="1">
    <citation type="journal article" date="2002" name="Proc. Natl. Acad. Sci. U.S.A.">
        <title>The Brucella suis genome reveals fundamental similarities between animal and plant pathogens and symbionts.</title>
        <authorList>
            <person name="Paulsen I.T."/>
            <person name="Seshadri R."/>
            <person name="Nelson K.E."/>
            <person name="Eisen J.A."/>
            <person name="Heidelberg J.F."/>
            <person name="Read T.D."/>
            <person name="Dodson R.J."/>
            <person name="Umayam L.A."/>
            <person name="Brinkac L.M."/>
            <person name="Beanan M.J."/>
            <person name="Daugherty S.C."/>
            <person name="DeBoy R.T."/>
            <person name="Durkin A.S."/>
            <person name="Kolonay J.F."/>
            <person name="Madupu R."/>
            <person name="Nelson W.C."/>
            <person name="Ayodeji B."/>
            <person name="Kraul M."/>
            <person name="Shetty J."/>
            <person name="Malek J.A."/>
            <person name="Van Aken S.E."/>
            <person name="Riedmuller S."/>
            <person name="Tettelin H."/>
            <person name="Gill S.R."/>
            <person name="White O."/>
            <person name="Salzberg S.L."/>
            <person name="Hoover D.L."/>
            <person name="Lindler L.E."/>
            <person name="Halling S.M."/>
            <person name="Boyle S.M."/>
            <person name="Fraser C.M."/>
        </authorList>
    </citation>
    <scope>NUCLEOTIDE SEQUENCE [LARGE SCALE GENOMIC DNA]</scope>
    <source>
        <strain>1330</strain>
    </source>
</reference>
<reference key="2">
    <citation type="journal article" date="2011" name="J. Bacteriol.">
        <title>Revised genome sequence of Brucella suis 1330.</title>
        <authorList>
            <person name="Tae H."/>
            <person name="Shallom S."/>
            <person name="Settlage R."/>
            <person name="Preston D."/>
            <person name="Adams L.G."/>
            <person name="Garner H.R."/>
        </authorList>
    </citation>
    <scope>NUCLEOTIDE SEQUENCE [LARGE SCALE GENOMIC DNA]</scope>
    <source>
        <strain>1330</strain>
    </source>
</reference>
<feature type="chain" id="PRO_0000274436" description="Thiamine import ATP-binding protein ThiQ">
    <location>
        <begin position="1"/>
        <end position="241"/>
    </location>
</feature>
<feature type="domain" description="ABC transporter" evidence="1">
    <location>
        <begin position="7"/>
        <end position="235"/>
    </location>
</feature>
<feature type="binding site" evidence="1">
    <location>
        <begin position="37"/>
        <end position="44"/>
    </location>
    <ligand>
        <name>ATP</name>
        <dbReference type="ChEBI" id="CHEBI:30616"/>
    </ligand>
</feature>
<name>THIQ_BRUSU</name>
<dbReference type="EC" id="7.6.2.15" evidence="1"/>
<dbReference type="EMBL" id="AE014291">
    <property type="protein sequence ID" value="AAN30658.1"/>
    <property type="molecule type" value="Genomic_DNA"/>
</dbReference>
<dbReference type="EMBL" id="CP002997">
    <property type="protein sequence ID" value="AEM19075.1"/>
    <property type="molecule type" value="Genomic_DNA"/>
</dbReference>
<dbReference type="RefSeq" id="WP_002964843.1">
    <property type="nucleotide sequence ID" value="NZ_KN046804.1"/>
</dbReference>
<dbReference type="SMR" id="Q8FYU9"/>
<dbReference type="GeneID" id="97532856"/>
<dbReference type="KEGG" id="bms:BR1759"/>
<dbReference type="KEGG" id="bsi:BS1330_I1753"/>
<dbReference type="PATRIC" id="fig|204722.21.peg.1225"/>
<dbReference type="HOGENOM" id="CLU_000604_1_22_5"/>
<dbReference type="PhylomeDB" id="Q8FYU9"/>
<dbReference type="Proteomes" id="UP000007104">
    <property type="component" value="Chromosome I"/>
</dbReference>
<dbReference type="GO" id="GO:0005886">
    <property type="term" value="C:plasma membrane"/>
    <property type="evidence" value="ECO:0007669"/>
    <property type="project" value="UniProtKB-SubCell"/>
</dbReference>
<dbReference type="GO" id="GO:0048502">
    <property type="term" value="F:ABC-type thiamine transporter activity"/>
    <property type="evidence" value="ECO:0007669"/>
    <property type="project" value="UniProtKB-EC"/>
</dbReference>
<dbReference type="GO" id="GO:0005524">
    <property type="term" value="F:ATP binding"/>
    <property type="evidence" value="ECO:0007669"/>
    <property type="project" value="UniProtKB-KW"/>
</dbReference>
<dbReference type="GO" id="GO:0016887">
    <property type="term" value="F:ATP hydrolysis activity"/>
    <property type="evidence" value="ECO:0007669"/>
    <property type="project" value="InterPro"/>
</dbReference>
<dbReference type="CDD" id="cd03298">
    <property type="entry name" value="ABC_ThiQ_thiamine_transporter"/>
    <property type="match status" value="1"/>
</dbReference>
<dbReference type="Gene3D" id="3.40.50.300">
    <property type="entry name" value="P-loop containing nucleotide triphosphate hydrolases"/>
    <property type="match status" value="1"/>
</dbReference>
<dbReference type="InterPro" id="IPR003593">
    <property type="entry name" value="AAA+_ATPase"/>
</dbReference>
<dbReference type="InterPro" id="IPR050093">
    <property type="entry name" value="ABC_SmlMolc_Importer"/>
</dbReference>
<dbReference type="InterPro" id="IPR003439">
    <property type="entry name" value="ABC_transporter-like_ATP-bd"/>
</dbReference>
<dbReference type="InterPro" id="IPR017871">
    <property type="entry name" value="ABC_transporter-like_CS"/>
</dbReference>
<dbReference type="InterPro" id="IPR027417">
    <property type="entry name" value="P-loop_NTPase"/>
</dbReference>
<dbReference type="InterPro" id="IPR005968">
    <property type="entry name" value="Thiamine_ABC_ThiQ"/>
</dbReference>
<dbReference type="NCBIfam" id="TIGR01277">
    <property type="entry name" value="thiQ"/>
    <property type="match status" value="1"/>
</dbReference>
<dbReference type="PANTHER" id="PTHR42781">
    <property type="entry name" value="SPERMIDINE/PUTRESCINE IMPORT ATP-BINDING PROTEIN POTA"/>
    <property type="match status" value="1"/>
</dbReference>
<dbReference type="PANTHER" id="PTHR42781:SF1">
    <property type="entry name" value="THIAMINE IMPORT ATP-BINDING PROTEIN THIQ"/>
    <property type="match status" value="1"/>
</dbReference>
<dbReference type="Pfam" id="PF00005">
    <property type="entry name" value="ABC_tran"/>
    <property type="match status" value="1"/>
</dbReference>
<dbReference type="SMART" id="SM00382">
    <property type="entry name" value="AAA"/>
    <property type="match status" value="1"/>
</dbReference>
<dbReference type="SUPFAM" id="SSF52540">
    <property type="entry name" value="P-loop containing nucleoside triphosphate hydrolases"/>
    <property type="match status" value="1"/>
</dbReference>
<dbReference type="PROSITE" id="PS00211">
    <property type="entry name" value="ABC_TRANSPORTER_1"/>
    <property type="match status" value="1"/>
</dbReference>
<dbReference type="PROSITE" id="PS50893">
    <property type="entry name" value="ABC_TRANSPORTER_2"/>
    <property type="match status" value="1"/>
</dbReference>
<dbReference type="PROSITE" id="PS51288">
    <property type="entry name" value="THIQ"/>
    <property type="match status" value="1"/>
</dbReference>
<gene>
    <name evidence="1" type="primary">thiQ</name>
    <name type="ordered locus">BR1759</name>
    <name type="ordered locus">BS1330_I1753</name>
</gene>
<protein>
    <recommendedName>
        <fullName evidence="1">Thiamine import ATP-binding protein ThiQ</fullName>
        <ecNumber evidence="1">7.6.2.15</ecNumber>
    </recommendedName>
</protein>
<evidence type="ECO:0000255" key="1">
    <source>
        <dbReference type="HAMAP-Rule" id="MF_01723"/>
    </source>
</evidence>
<accession>Q8FYU9</accession>
<accession>G0K799</accession>
<comment type="function">
    <text evidence="1">Part of the ABC transporter complex ThiBPQ involved in thiamine import. Responsible for energy coupling to the transport system.</text>
</comment>
<comment type="catalytic activity">
    <reaction evidence="1">
        <text>thiamine(out) + ATP + H2O = thiamine(in) + ADP + phosphate + H(+)</text>
        <dbReference type="Rhea" id="RHEA:29811"/>
        <dbReference type="ChEBI" id="CHEBI:15377"/>
        <dbReference type="ChEBI" id="CHEBI:15378"/>
        <dbReference type="ChEBI" id="CHEBI:18385"/>
        <dbReference type="ChEBI" id="CHEBI:30616"/>
        <dbReference type="ChEBI" id="CHEBI:43474"/>
        <dbReference type="ChEBI" id="CHEBI:456216"/>
        <dbReference type="EC" id="7.6.2.15"/>
    </reaction>
</comment>
<comment type="subunit">
    <text evidence="1">The complex is composed of two ATP-binding proteins (ThiQ), two transmembrane proteins (ThiP) and a solute-binding protein (ThiB).</text>
</comment>
<comment type="subcellular location">
    <subcellularLocation>
        <location evidence="1">Cell inner membrane</location>
        <topology evidence="1">Peripheral membrane protein</topology>
    </subcellularLocation>
</comment>
<comment type="similarity">
    <text evidence="1">Belongs to the ABC transporter superfamily. Thiamine importer (TC 3.A.1.19.1) family.</text>
</comment>
<organism>
    <name type="scientific">Brucella suis biovar 1 (strain 1330)</name>
    <dbReference type="NCBI Taxonomy" id="204722"/>
    <lineage>
        <taxon>Bacteria</taxon>
        <taxon>Pseudomonadati</taxon>
        <taxon>Pseudomonadota</taxon>
        <taxon>Alphaproteobacteria</taxon>
        <taxon>Hyphomicrobiales</taxon>
        <taxon>Brucellaceae</taxon>
        <taxon>Brucella/Ochrobactrum group</taxon>
        <taxon>Brucella</taxon>
    </lineage>
</organism>
<proteinExistence type="inferred from homology"/>